<organism>
    <name type="scientific">Listeria innocua serovar 6a (strain ATCC BAA-680 / CLIP 11262)</name>
    <dbReference type="NCBI Taxonomy" id="272626"/>
    <lineage>
        <taxon>Bacteria</taxon>
        <taxon>Bacillati</taxon>
        <taxon>Bacillota</taxon>
        <taxon>Bacilli</taxon>
        <taxon>Bacillales</taxon>
        <taxon>Listeriaceae</taxon>
        <taxon>Listeria</taxon>
    </lineage>
</organism>
<reference key="1">
    <citation type="journal article" date="2001" name="Science">
        <title>Comparative genomics of Listeria species.</title>
        <authorList>
            <person name="Glaser P."/>
            <person name="Frangeul L."/>
            <person name="Buchrieser C."/>
            <person name="Rusniok C."/>
            <person name="Amend A."/>
            <person name="Baquero F."/>
            <person name="Berche P."/>
            <person name="Bloecker H."/>
            <person name="Brandt P."/>
            <person name="Chakraborty T."/>
            <person name="Charbit A."/>
            <person name="Chetouani F."/>
            <person name="Couve E."/>
            <person name="de Daruvar A."/>
            <person name="Dehoux P."/>
            <person name="Domann E."/>
            <person name="Dominguez-Bernal G."/>
            <person name="Duchaud E."/>
            <person name="Durant L."/>
            <person name="Dussurget O."/>
            <person name="Entian K.-D."/>
            <person name="Fsihi H."/>
            <person name="Garcia-del Portillo F."/>
            <person name="Garrido P."/>
            <person name="Gautier L."/>
            <person name="Goebel W."/>
            <person name="Gomez-Lopez N."/>
            <person name="Hain T."/>
            <person name="Hauf J."/>
            <person name="Jackson D."/>
            <person name="Jones L.-M."/>
            <person name="Kaerst U."/>
            <person name="Kreft J."/>
            <person name="Kuhn M."/>
            <person name="Kunst F."/>
            <person name="Kurapkat G."/>
            <person name="Madueno E."/>
            <person name="Maitournam A."/>
            <person name="Mata Vicente J."/>
            <person name="Ng E."/>
            <person name="Nedjari H."/>
            <person name="Nordsiek G."/>
            <person name="Novella S."/>
            <person name="de Pablos B."/>
            <person name="Perez-Diaz J.-C."/>
            <person name="Purcell R."/>
            <person name="Remmel B."/>
            <person name="Rose M."/>
            <person name="Schlueter T."/>
            <person name="Simoes N."/>
            <person name="Tierrez A."/>
            <person name="Vazquez-Boland J.-A."/>
            <person name="Voss H."/>
            <person name="Wehland J."/>
            <person name="Cossart P."/>
        </authorList>
    </citation>
    <scope>NUCLEOTIDE SEQUENCE [LARGE SCALE GENOMIC DNA]</scope>
    <source>
        <strain>ATCC BAA-680 / CLIP 11262</strain>
    </source>
</reference>
<accession>Q92AG2</accession>
<name>NORM_LISIN</name>
<gene>
    <name type="primary">norM</name>
    <name type="ordered locus">lin1960</name>
</gene>
<sequence>MQQTVTYGAKWKQFLTIFTPIVITQLTLFSMTFFDTTMSGNYSNQALAGVAIGSSFWAPVNAAFSGLLMAITPIIAQLIGAKKEKQVKNTVHNGLYIALFLAFILILINFLVVPTILTHMPVTAEVAHIARHFLNGICIGIPAFFISAILRSFIDSLGLTRVTMLITLCTVPFNIFLNYCFIFGNFGFPEMGGAGSGYATGITYWLVVLVSVILIQTQTRLRKFGIFKGLTALRFSKVKEIIGIGVPNGLTILFETSIFSAVTILMGAFGTETIAAHQSANSVCTLLYAFPLSVASTLTILGGYETGAKRLKDAKQYRHIGMTAAILIGCINGAILFFFRDIIAGFYTNDAELSDLIMHFLVYAILFQFADAVLSPVLGALRGYKDVAITSIIAFISYWLIGLPVGYGLSFTNLGPFGYWIGLSTGLFVAAFILSIRVRKTERKLSLNAKNAEISS</sequence>
<feature type="chain" id="PRO_0000164221" description="Probable multidrug resistance protein NorM">
    <location>
        <begin position="1"/>
        <end position="456"/>
    </location>
</feature>
<feature type="transmembrane region" description="Helical" evidence="2">
    <location>
        <begin position="13"/>
        <end position="34"/>
    </location>
</feature>
<feature type="transmembrane region" description="Helical" evidence="2">
    <location>
        <begin position="54"/>
        <end position="76"/>
    </location>
</feature>
<feature type="transmembrane region" description="Helical" evidence="2">
    <location>
        <begin position="95"/>
        <end position="117"/>
    </location>
</feature>
<feature type="transmembrane region" description="Helical" evidence="2">
    <location>
        <begin position="132"/>
        <end position="154"/>
    </location>
</feature>
<feature type="transmembrane region" description="Helical" evidence="2">
    <location>
        <begin position="161"/>
        <end position="183"/>
    </location>
</feature>
<feature type="transmembrane region" description="Helical" evidence="2">
    <location>
        <begin position="193"/>
        <end position="215"/>
    </location>
</feature>
<feature type="transmembrane region" description="Helical" evidence="2">
    <location>
        <begin position="244"/>
        <end position="266"/>
    </location>
</feature>
<feature type="transmembrane region" description="Helical" evidence="2">
    <location>
        <begin position="286"/>
        <end position="308"/>
    </location>
</feature>
<feature type="transmembrane region" description="Helical" evidence="2">
    <location>
        <begin position="321"/>
        <end position="343"/>
    </location>
</feature>
<feature type="transmembrane region" description="Helical" evidence="2">
    <location>
        <begin position="358"/>
        <end position="380"/>
    </location>
</feature>
<feature type="transmembrane region" description="Helical" evidence="2">
    <location>
        <begin position="387"/>
        <end position="409"/>
    </location>
</feature>
<feature type="transmembrane region" description="Helical" evidence="2">
    <location>
        <begin position="414"/>
        <end position="436"/>
    </location>
</feature>
<keyword id="KW-0050">Antiport</keyword>
<keyword id="KW-1003">Cell membrane</keyword>
<keyword id="KW-0406">Ion transport</keyword>
<keyword id="KW-0472">Membrane</keyword>
<keyword id="KW-0812">Transmembrane</keyword>
<keyword id="KW-1133">Transmembrane helix</keyword>
<keyword id="KW-0813">Transport</keyword>
<comment type="function">
    <text evidence="1">Multidrug efflux pump.</text>
</comment>
<comment type="subcellular location">
    <subcellularLocation>
        <location evidence="1">Cell membrane</location>
        <topology evidence="1">Multi-pass membrane protein</topology>
    </subcellularLocation>
</comment>
<comment type="similarity">
    <text evidence="3">Belongs to the multi antimicrobial extrusion (MATE) (TC 2.A.66.1) family.</text>
</comment>
<proteinExistence type="inferred from homology"/>
<dbReference type="EMBL" id="AL596170">
    <property type="protein sequence ID" value="CAC97190.1"/>
    <property type="molecule type" value="Genomic_DNA"/>
</dbReference>
<dbReference type="PIR" id="AF1677">
    <property type="entry name" value="AF1677"/>
</dbReference>
<dbReference type="RefSeq" id="WP_003762981.1">
    <property type="nucleotide sequence ID" value="NC_003212.1"/>
</dbReference>
<dbReference type="SMR" id="Q92AG2"/>
<dbReference type="STRING" id="272626.gene:17566318"/>
<dbReference type="GeneID" id="93235298"/>
<dbReference type="KEGG" id="lin:lin1960"/>
<dbReference type="eggNOG" id="COG0534">
    <property type="taxonomic scope" value="Bacteria"/>
</dbReference>
<dbReference type="HOGENOM" id="CLU_012893_6_0_9"/>
<dbReference type="OrthoDB" id="9780160at2"/>
<dbReference type="Proteomes" id="UP000002513">
    <property type="component" value="Chromosome"/>
</dbReference>
<dbReference type="GO" id="GO:0005886">
    <property type="term" value="C:plasma membrane"/>
    <property type="evidence" value="ECO:0007669"/>
    <property type="project" value="UniProtKB-SubCell"/>
</dbReference>
<dbReference type="GO" id="GO:0015297">
    <property type="term" value="F:antiporter activity"/>
    <property type="evidence" value="ECO:0007669"/>
    <property type="project" value="UniProtKB-KW"/>
</dbReference>
<dbReference type="GO" id="GO:0042910">
    <property type="term" value="F:xenobiotic transmembrane transporter activity"/>
    <property type="evidence" value="ECO:0007669"/>
    <property type="project" value="InterPro"/>
</dbReference>
<dbReference type="GO" id="GO:0006811">
    <property type="term" value="P:monoatomic ion transport"/>
    <property type="evidence" value="ECO:0007669"/>
    <property type="project" value="UniProtKB-KW"/>
</dbReference>
<dbReference type="CDD" id="cd13131">
    <property type="entry name" value="MATE_NorM_like"/>
    <property type="match status" value="1"/>
</dbReference>
<dbReference type="InterPro" id="IPR002528">
    <property type="entry name" value="MATE_fam"/>
</dbReference>
<dbReference type="InterPro" id="IPR050222">
    <property type="entry name" value="MATE_MdtK"/>
</dbReference>
<dbReference type="InterPro" id="IPR048279">
    <property type="entry name" value="MdtK-like"/>
</dbReference>
<dbReference type="NCBIfam" id="TIGR00797">
    <property type="entry name" value="matE"/>
    <property type="match status" value="1"/>
</dbReference>
<dbReference type="PANTHER" id="PTHR43298:SF2">
    <property type="entry name" value="FMN_FAD EXPORTER YEEO-RELATED"/>
    <property type="match status" value="1"/>
</dbReference>
<dbReference type="PANTHER" id="PTHR43298">
    <property type="entry name" value="MULTIDRUG RESISTANCE PROTEIN NORM-RELATED"/>
    <property type="match status" value="1"/>
</dbReference>
<dbReference type="Pfam" id="PF01554">
    <property type="entry name" value="MatE"/>
    <property type="match status" value="2"/>
</dbReference>
<dbReference type="PIRSF" id="PIRSF006603">
    <property type="entry name" value="DinF"/>
    <property type="match status" value="1"/>
</dbReference>
<protein>
    <recommendedName>
        <fullName>Probable multidrug resistance protein NorM</fullName>
    </recommendedName>
    <alternativeName>
        <fullName>Multidrug-efflux transporter</fullName>
    </alternativeName>
</protein>
<evidence type="ECO:0000250" key="1"/>
<evidence type="ECO:0000255" key="2"/>
<evidence type="ECO:0000305" key="3"/>